<feature type="chain" id="PRO_0000130420" description="Large ribosomal subunit protein uL29">
    <location>
        <begin position="1"/>
        <end position="200"/>
    </location>
</feature>
<feature type="region of interest" description="Large ribosomal subunit protein uL29" evidence="1">
    <location>
        <begin position="1"/>
        <end position="107"/>
    </location>
</feature>
<feature type="region of interest" description="Disordered" evidence="2">
    <location>
        <begin position="92"/>
        <end position="200"/>
    </location>
</feature>
<feature type="region of interest" description="Unknown">
    <location>
        <begin position="108"/>
        <end position="200"/>
    </location>
</feature>
<feature type="compositionally biased region" description="Basic and acidic residues" evidence="2">
    <location>
        <begin position="93"/>
        <end position="179"/>
    </location>
</feature>
<feature type="compositionally biased region" description="Basic residues" evidence="2">
    <location>
        <begin position="186"/>
        <end position="200"/>
    </location>
</feature>
<sequence>MTIAKELKQKSNEELVKLVIKLKGELLEYRFKLAHGELDKPHLIAKVRKLLAVVLTILTERKLNWQVEKDKYKLLSRKTNELIVNSWKQKLSTKPESKQETKKAEVKPKVESKPESKQETKKAEVKPLKQETKKVEVKPKVEPKPLKQETKKVEARIETKTKVESKPLKQEVKKVEAKKSVSKPQKPVKAKMIKTKEKKQ</sequence>
<keyword id="KW-1185">Reference proteome</keyword>
<keyword id="KW-0687">Ribonucleoprotein</keyword>
<keyword id="KW-0689">Ribosomal protein</keyword>
<proteinExistence type="inferred from homology"/>
<evidence type="ECO:0000255" key="1">
    <source>
        <dbReference type="HAMAP-Rule" id="MF_00374"/>
    </source>
</evidence>
<evidence type="ECO:0000256" key="2">
    <source>
        <dbReference type="SAM" id="MobiDB-lite"/>
    </source>
</evidence>
<evidence type="ECO:0000303" key="3">
    <source>
    </source>
</evidence>
<comment type="similarity">
    <text evidence="1">Belongs to the universal ribosomal protein uL29 family.</text>
</comment>
<accession>P47405</accession>
<protein>
    <recommendedName>
        <fullName evidence="1">Large ribosomal subunit protein uL29</fullName>
    </recommendedName>
    <alternativeName>
        <fullName>50S ribosomal protein L29</fullName>
    </alternativeName>
</protein>
<reference key="1">
    <citation type="journal article" date="1995" name="Science">
        <title>The minimal gene complement of Mycoplasma genitalium.</title>
        <authorList>
            <person name="Fraser C.M."/>
            <person name="Gocayne J.D."/>
            <person name="White O."/>
            <person name="Adams M.D."/>
            <person name="Clayton R.A."/>
            <person name="Fleischmann R.D."/>
            <person name="Bult C.J."/>
            <person name="Kerlavage A.R."/>
            <person name="Sutton G.G."/>
            <person name="Kelley J.M."/>
            <person name="Fritchman J.L."/>
            <person name="Weidman J.F."/>
            <person name="Small K.V."/>
            <person name="Sandusky M."/>
            <person name="Fuhrmann J.L."/>
            <person name="Nguyen D.T."/>
            <person name="Utterback T.R."/>
            <person name="Saudek D.M."/>
            <person name="Phillips C.A."/>
            <person name="Merrick J.M."/>
            <person name="Tomb J.-F."/>
            <person name="Dougherty B.A."/>
            <person name="Bott K.F."/>
            <person name="Hu P.-C."/>
            <person name="Lucier T.S."/>
            <person name="Peterson S.N."/>
            <person name="Smith H.O."/>
            <person name="Hutchison C.A. III"/>
            <person name="Venter J.C."/>
        </authorList>
    </citation>
    <scope>NUCLEOTIDE SEQUENCE [LARGE SCALE GENOMIC DNA]</scope>
    <source>
        <strain>ATCC 33530 / DSM 19775 / NCTC 10195 / G37</strain>
    </source>
</reference>
<gene>
    <name evidence="1 3" type="primary">rpmC</name>
    <name type="ordered locus">MG159</name>
</gene>
<dbReference type="EMBL" id="L43967">
    <property type="protein sequence ID" value="AAC71377.1"/>
    <property type="molecule type" value="Genomic_DNA"/>
</dbReference>
<dbReference type="PIR" id="F64217">
    <property type="entry name" value="F64217"/>
</dbReference>
<dbReference type="RefSeq" id="WP_009885843.1">
    <property type="nucleotide sequence ID" value="NC_000908.2"/>
</dbReference>
<dbReference type="SMR" id="P47405"/>
<dbReference type="STRING" id="243273.MG_159"/>
<dbReference type="GeneID" id="88282292"/>
<dbReference type="KEGG" id="mge:MG_159"/>
<dbReference type="eggNOG" id="COG0255">
    <property type="taxonomic scope" value="Bacteria"/>
</dbReference>
<dbReference type="HOGENOM" id="CLU_1364954_0_0_14"/>
<dbReference type="InParanoid" id="P47405"/>
<dbReference type="OrthoDB" id="401368at2"/>
<dbReference type="BioCyc" id="MGEN243273:G1GJ2-183-MONOMER"/>
<dbReference type="Proteomes" id="UP000000807">
    <property type="component" value="Chromosome"/>
</dbReference>
<dbReference type="GO" id="GO:0022625">
    <property type="term" value="C:cytosolic large ribosomal subunit"/>
    <property type="evidence" value="ECO:0000318"/>
    <property type="project" value="GO_Central"/>
</dbReference>
<dbReference type="GO" id="GO:0003735">
    <property type="term" value="F:structural constituent of ribosome"/>
    <property type="evidence" value="ECO:0007669"/>
    <property type="project" value="InterPro"/>
</dbReference>
<dbReference type="GO" id="GO:0006412">
    <property type="term" value="P:translation"/>
    <property type="evidence" value="ECO:0007669"/>
    <property type="project" value="UniProtKB-UniRule"/>
</dbReference>
<dbReference type="CDD" id="cd00427">
    <property type="entry name" value="Ribosomal_L29_HIP"/>
    <property type="match status" value="1"/>
</dbReference>
<dbReference type="Gene3D" id="1.10.287.310">
    <property type="match status" value="1"/>
</dbReference>
<dbReference type="HAMAP" id="MF_00374">
    <property type="entry name" value="Ribosomal_uL29"/>
    <property type="match status" value="1"/>
</dbReference>
<dbReference type="InterPro" id="IPR050063">
    <property type="entry name" value="Ribosomal_protein_uL29"/>
</dbReference>
<dbReference type="InterPro" id="IPR001854">
    <property type="entry name" value="Ribosomal_uL29"/>
</dbReference>
<dbReference type="InterPro" id="IPR018254">
    <property type="entry name" value="Ribosomal_uL29_CS"/>
</dbReference>
<dbReference type="InterPro" id="IPR036049">
    <property type="entry name" value="Ribosomal_uL29_sf"/>
</dbReference>
<dbReference type="NCBIfam" id="TIGR00012">
    <property type="entry name" value="L29"/>
    <property type="match status" value="1"/>
</dbReference>
<dbReference type="PANTHER" id="PTHR10916">
    <property type="entry name" value="60S RIBOSOMAL PROTEIN L35/50S RIBOSOMAL PROTEIN L29"/>
    <property type="match status" value="1"/>
</dbReference>
<dbReference type="PANTHER" id="PTHR10916:SF0">
    <property type="entry name" value="LARGE RIBOSOMAL SUBUNIT PROTEIN UL29C"/>
    <property type="match status" value="1"/>
</dbReference>
<dbReference type="Pfam" id="PF00831">
    <property type="entry name" value="Ribosomal_L29"/>
    <property type="match status" value="1"/>
</dbReference>
<dbReference type="SUPFAM" id="SSF46561">
    <property type="entry name" value="Ribosomal protein L29 (L29p)"/>
    <property type="match status" value="1"/>
</dbReference>
<dbReference type="PROSITE" id="PS00579">
    <property type="entry name" value="RIBOSOMAL_L29"/>
    <property type="match status" value="1"/>
</dbReference>
<organism>
    <name type="scientific">Mycoplasma genitalium (strain ATCC 33530 / DSM 19775 / NCTC 10195 / G37)</name>
    <name type="common">Mycoplasmoides genitalium</name>
    <dbReference type="NCBI Taxonomy" id="243273"/>
    <lineage>
        <taxon>Bacteria</taxon>
        <taxon>Bacillati</taxon>
        <taxon>Mycoplasmatota</taxon>
        <taxon>Mycoplasmoidales</taxon>
        <taxon>Mycoplasmoidaceae</taxon>
        <taxon>Mycoplasmoides</taxon>
    </lineage>
</organism>
<name>RL29_MYCGE</name>